<comment type="similarity">
    <text evidence="1">Belongs to the UPF0305 family.</text>
</comment>
<proteinExistence type="inferred from homology"/>
<keyword id="KW-1185">Reference proteome</keyword>
<accession>Q58062</accession>
<sequence>MKARELFEKLKKELNNFSIYDIMMIRSFIEKDAKYLPPQYKNHYVEAMMKYLIETFNEIRKKSVDEIQDEEIDEEKLNEMLNRIERFRKYYTPDEERFINLSKILCPYLAFIAKKPLHPEYLTFPGNVKIIKKGNNYYCPVKNKQLNEYSLCEFCVCKSIDELK</sequence>
<name>Y646_METJA</name>
<dbReference type="EMBL" id="L77117">
    <property type="protein sequence ID" value="AAB98640.1"/>
    <property type="molecule type" value="Genomic_DNA"/>
</dbReference>
<dbReference type="PIR" id="F64380">
    <property type="entry name" value="F64380"/>
</dbReference>
<dbReference type="RefSeq" id="WP_010870151.1">
    <property type="nucleotide sequence ID" value="NC_000909.1"/>
</dbReference>
<dbReference type="FunCoup" id="Q58062">
    <property type="interactions" value="1"/>
</dbReference>
<dbReference type="STRING" id="243232.MJ_0646"/>
<dbReference type="PaxDb" id="243232-MJ_0646"/>
<dbReference type="EnsemblBacteria" id="AAB98640">
    <property type="protein sequence ID" value="AAB98640"/>
    <property type="gene ID" value="MJ_0646"/>
</dbReference>
<dbReference type="GeneID" id="1451512"/>
<dbReference type="KEGG" id="mja:MJ_0646"/>
<dbReference type="eggNOG" id="arCOG03215">
    <property type="taxonomic scope" value="Archaea"/>
</dbReference>
<dbReference type="HOGENOM" id="CLU_089549_1_0_2"/>
<dbReference type="InParanoid" id="Q58062"/>
<dbReference type="OrthoDB" id="81482at2157"/>
<dbReference type="PhylomeDB" id="Q58062"/>
<dbReference type="Proteomes" id="UP000000805">
    <property type="component" value="Chromosome"/>
</dbReference>
<dbReference type="HAMAP" id="MF_00763">
    <property type="entry name" value="UPF0305"/>
    <property type="match status" value="1"/>
</dbReference>
<dbReference type="InterPro" id="IPR019215">
    <property type="entry name" value="DUF2115"/>
</dbReference>
<dbReference type="NCBIfam" id="NF002176">
    <property type="entry name" value="PRK01022.1-4"/>
    <property type="match status" value="1"/>
</dbReference>
<dbReference type="Pfam" id="PF09888">
    <property type="entry name" value="DUF2115"/>
    <property type="match status" value="1"/>
</dbReference>
<dbReference type="PIRSF" id="PIRSF004959">
    <property type="entry name" value="UCP004959"/>
    <property type="match status" value="1"/>
</dbReference>
<protein>
    <recommendedName>
        <fullName evidence="1">UPF0305 protein MJ0646</fullName>
    </recommendedName>
</protein>
<feature type="chain" id="PRO_0000141703" description="UPF0305 protein MJ0646">
    <location>
        <begin position="1"/>
        <end position="164"/>
    </location>
</feature>
<reference key="1">
    <citation type="journal article" date="1996" name="Science">
        <title>Complete genome sequence of the methanogenic archaeon, Methanococcus jannaschii.</title>
        <authorList>
            <person name="Bult C.J."/>
            <person name="White O."/>
            <person name="Olsen G.J."/>
            <person name="Zhou L."/>
            <person name="Fleischmann R.D."/>
            <person name="Sutton G.G."/>
            <person name="Blake J.A."/>
            <person name="FitzGerald L.M."/>
            <person name="Clayton R.A."/>
            <person name="Gocayne J.D."/>
            <person name="Kerlavage A.R."/>
            <person name="Dougherty B.A."/>
            <person name="Tomb J.-F."/>
            <person name="Adams M.D."/>
            <person name="Reich C.I."/>
            <person name="Overbeek R."/>
            <person name="Kirkness E.F."/>
            <person name="Weinstock K.G."/>
            <person name="Merrick J.M."/>
            <person name="Glodek A."/>
            <person name="Scott J.L."/>
            <person name="Geoghagen N.S.M."/>
            <person name="Weidman J.F."/>
            <person name="Fuhrmann J.L."/>
            <person name="Nguyen D."/>
            <person name="Utterback T.R."/>
            <person name="Kelley J.M."/>
            <person name="Peterson J.D."/>
            <person name="Sadow P.W."/>
            <person name="Hanna M.C."/>
            <person name="Cotton M.D."/>
            <person name="Roberts K.M."/>
            <person name="Hurst M.A."/>
            <person name="Kaine B.P."/>
            <person name="Borodovsky M."/>
            <person name="Klenk H.-P."/>
            <person name="Fraser C.M."/>
            <person name="Smith H.O."/>
            <person name="Woese C.R."/>
            <person name="Venter J.C."/>
        </authorList>
    </citation>
    <scope>NUCLEOTIDE SEQUENCE [LARGE SCALE GENOMIC DNA]</scope>
    <source>
        <strain>ATCC 43067 / DSM 2661 / JAL-1 / JCM 10045 / NBRC 100440</strain>
    </source>
</reference>
<evidence type="ECO:0000255" key="1">
    <source>
        <dbReference type="HAMAP-Rule" id="MF_00763"/>
    </source>
</evidence>
<organism>
    <name type="scientific">Methanocaldococcus jannaschii (strain ATCC 43067 / DSM 2661 / JAL-1 / JCM 10045 / NBRC 100440)</name>
    <name type="common">Methanococcus jannaschii</name>
    <dbReference type="NCBI Taxonomy" id="243232"/>
    <lineage>
        <taxon>Archaea</taxon>
        <taxon>Methanobacteriati</taxon>
        <taxon>Methanobacteriota</taxon>
        <taxon>Methanomada group</taxon>
        <taxon>Methanococci</taxon>
        <taxon>Methanococcales</taxon>
        <taxon>Methanocaldococcaceae</taxon>
        <taxon>Methanocaldococcus</taxon>
    </lineage>
</organism>
<gene>
    <name type="ordered locus">MJ0646</name>
</gene>